<organism>
    <name type="scientific">Nephroselmis olivacea</name>
    <name type="common">Green alga</name>
    <dbReference type="NCBI Taxonomy" id="31312"/>
    <lineage>
        <taxon>Eukaryota</taxon>
        <taxon>Viridiplantae</taxon>
        <taxon>Chlorophyta</taxon>
        <taxon>Nephroselmidophyceae</taxon>
        <taxon>Nephroselmidales</taxon>
        <taxon>Nephroselmidaceae</taxon>
        <taxon>Nephroselmis</taxon>
    </lineage>
</organism>
<name>RR9_NEPOL</name>
<accession>Q9TL29</accession>
<keyword id="KW-0150">Chloroplast</keyword>
<keyword id="KW-0934">Plastid</keyword>
<keyword id="KW-0687">Ribonucleoprotein</keyword>
<keyword id="KW-0689">Ribosomal protein</keyword>
<proteinExistence type="inferred from homology"/>
<feature type="chain" id="PRO_0000111457" description="Small ribosomal subunit protein uS9c">
    <location>
        <begin position="1"/>
        <end position="134"/>
    </location>
</feature>
<feature type="region of interest" description="Disordered" evidence="1">
    <location>
        <begin position="105"/>
        <end position="134"/>
    </location>
</feature>
<feature type="compositionally biased region" description="Basic residues" evidence="1">
    <location>
        <begin position="115"/>
        <end position="134"/>
    </location>
</feature>
<protein>
    <recommendedName>
        <fullName evidence="2">Small ribosomal subunit protein uS9c</fullName>
    </recommendedName>
    <alternativeName>
        <fullName>30S ribosomal protein S9, chloroplastic</fullName>
    </alternativeName>
</protein>
<sequence length="134" mass="14881">MDHTSSVGLRKTGRRKCAVAQVRIIEGTGQLTINQRPGVPYLQYNPAYLLAAQGALDVTELTNRYDTIVKTKGGGLTGQAEAIKLGLARALCSLHIKHRKALKPQGYLTRNPLRKERKKYGLKKARKAPQFSKR</sequence>
<geneLocation type="chloroplast"/>
<evidence type="ECO:0000256" key="1">
    <source>
        <dbReference type="SAM" id="MobiDB-lite"/>
    </source>
</evidence>
<evidence type="ECO:0000305" key="2"/>
<dbReference type="EMBL" id="AF137379">
    <property type="protein sequence ID" value="AAD54787.1"/>
    <property type="molecule type" value="Genomic_DNA"/>
</dbReference>
<dbReference type="RefSeq" id="NP_050816.1">
    <property type="nucleotide sequence ID" value="NC_000927.1"/>
</dbReference>
<dbReference type="SMR" id="Q9TL29"/>
<dbReference type="GeneID" id="801936"/>
<dbReference type="GO" id="GO:0009507">
    <property type="term" value="C:chloroplast"/>
    <property type="evidence" value="ECO:0007669"/>
    <property type="project" value="UniProtKB-SubCell"/>
</dbReference>
<dbReference type="GO" id="GO:0015935">
    <property type="term" value="C:small ribosomal subunit"/>
    <property type="evidence" value="ECO:0007669"/>
    <property type="project" value="TreeGrafter"/>
</dbReference>
<dbReference type="GO" id="GO:0003723">
    <property type="term" value="F:RNA binding"/>
    <property type="evidence" value="ECO:0007669"/>
    <property type="project" value="TreeGrafter"/>
</dbReference>
<dbReference type="GO" id="GO:0003735">
    <property type="term" value="F:structural constituent of ribosome"/>
    <property type="evidence" value="ECO:0007669"/>
    <property type="project" value="InterPro"/>
</dbReference>
<dbReference type="GO" id="GO:0006412">
    <property type="term" value="P:translation"/>
    <property type="evidence" value="ECO:0007669"/>
    <property type="project" value="UniProtKB-UniRule"/>
</dbReference>
<dbReference type="FunFam" id="3.30.230.10:FF:000001">
    <property type="entry name" value="30S ribosomal protein S9"/>
    <property type="match status" value="1"/>
</dbReference>
<dbReference type="Gene3D" id="3.30.230.10">
    <property type="match status" value="1"/>
</dbReference>
<dbReference type="HAMAP" id="MF_00532_B">
    <property type="entry name" value="Ribosomal_uS9_B"/>
    <property type="match status" value="1"/>
</dbReference>
<dbReference type="InterPro" id="IPR020568">
    <property type="entry name" value="Ribosomal_Su5_D2-typ_SF"/>
</dbReference>
<dbReference type="InterPro" id="IPR000754">
    <property type="entry name" value="Ribosomal_uS9"/>
</dbReference>
<dbReference type="InterPro" id="IPR023035">
    <property type="entry name" value="Ribosomal_uS9_bac/plastid"/>
</dbReference>
<dbReference type="InterPro" id="IPR020574">
    <property type="entry name" value="Ribosomal_uS9_CS"/>
</dbReference>
<dbReference type="InterPro" id="IPR014721">
    <property type="entry name" value="Ribsml_uS5_D2-typ_fold_subgr"/>
</dbReference>
<dbReference type="NCBIfam" id="NF001099">
    <property type="entry name" value="PRK00132.1"/>
    <property type="match status" value="1"/>
</dbReference>
<dbReference type="PANTHER" id="PTHR21569">
    <property type="entry name" value="RIBOSOMAL PROTEIN S9"/>
    <property type="match status" value="1"/>
</dbReference>
<dbReference type="PANTHER" id="PTHR21569:SF1">
    <property type="entry name" value="SMALL RIBOSOMAL SUBUNIT PROTEIN US9M"/>
    <property type="match status" value="1"/>
</dbReference>
<dbReference type="Pfam" id="PF00380">
    <property type="entry name" value="Ribosomal_S9"/>
    <property type="match status" value="1"/>
</dbReference>
<dbReference type="SUPFAM" id="SSF54211">
    <property type="entry name" value="Ribosomal protein S5 domain 2-like"/>
    <property type="match status" value="1"/>
</dbReference>
<dbReference type="PROSITE" id="PS00360">
    <property type="entry name" value="RIBOSOMAL_S9"/>
    <property type="match status" value="1"/>
</dbReference>
<reference key="1">
    <citation type="journal article" date="1999" name="Proc. Natl. Acad. Sci. U.S.A.">
        <title>The complete chloroplast DNA sequence of the green alga Nephroselmis olivacea: insights into the architecture of ancestral chloroplast genomes.</title>
        <authorList>
            <person name="Turmel M."/>
            <person name="Otis C."/>
            <person name="Lemieux C."/>
        </authorList>
    </citation>
    <scope>NUCLEOTIDE SEQUENCE [LARGE SCALE GENOMIC DNA]</scope>
    <source>
        <strain>NIES-484 / S-N-5-8</strain>
    </source>
</reference>
<comment type="subcellular location">
    <subcellularLocation>
        <location>Plastid</location>
        <location>Chloroplast</location>
    </subcellularLocation>
</comment>
<comment type="similarity">
    <text evidence="2">Belongs to the universal ribosomal protein uS9 family.</text>
</comment>
<gene>
    <name type="primary">rps9</name>
</gene>